<feature type="chain" id="PRO_0000150429" description="Olfactory receptor 1E2">
    <location>
        <begin position="1"/>
        <end position="314"/>
    </location>
</feature>
<feature type="topological domain" description="Extracellular" evidence="1">
    <location>
        <begin position="1"/>
        <end position="25"/>
    </location>
</feature>
<feature type="transmembrane region" description="Helical; Name=1" evidence="1">
    <location>
        <begin position="26"/>
        <end position="49"/>
    </location>
</feature>
<feature type="topological domain" description="Cytoplasmic" evidence="1">
    <location>
        <begin position="50"/>
        <end position="57"/>
    </location>
</feature>
<feature type="transmembrane region" description="Helical; Name=2" evidence="1">
    <location>
        <begin position="58"/>
        <end position="79"/>
    </location>
</feature>
<feature type="topological domain" description="Extracellular" evidence="1">
    <location>
        <begin position="80"/>
        <end position="100"/>
    </location>
</feature>
<feature type="transmembrane region" description="Helical; Name=3" evidence="1">
    <location>
        <begin position="101"/>
        <end position="120"/>
    </location>
</feature>
<feature type="topological domain" description="Cytoplasmic" evidence="1">
    <location>
        <begin position="121"/>
        <end position="139"/>
    </location>
</feature>
<feature type="transmembrane region" description="Helical; Name=4" evidence="1">
    <location>
        <begin position="140"/>
        <end position="158"/>
    </location>
</feature>
<feature type="topological domain" description="Extracellular" evidence="1">
    <location>
        <begin position="159"/>
        <end position="196"/>
    </location>
</feature>
<feature type="transmembrane region" description="Helical; Name=5" evidence="1">
    <location>
        <begin position="197"/>
        <end position="219"/>
    </location>
</feature>
<feature type="topological domain" description="Cytoplasmic" evidence="1">
    <location>
        <begin position="220"/>
        <end position="236"/>
    </location>
</feature>
<feature type="transmembrane region" description="Helical; Name=6" evidence="1">
    <location>
        <begin position="237"/>
        <end position="260"/>
    </location>
</feature>
<feature type="topological domain" description="Extracellular" evidence="1">
    <location>
        <begin position="261"/>
        <end position="272"/>
    </location>
</feature>
<feature type="transmembrane region" description="Helical; Name=7" evidence="1">
    <location>
        <begin position="273"/>
        <end position="292"/>
    </location>
</feature>
<feature type="topological domain" description="Cytoplasmic" evidence="1">
    <location>
        <begin position="293"/>
        <end position="314"/>
    </location>
</feature>
<feature type="glycosylation site" description="N-linked (GlcNAc...) asparagine" evidence="1">
    <location>
        <position position="5"/>
    </location>
</feature>
<feature type="glycosylation site" description="N-linked (GlcNAc...) asparagine" evidence="1">
    <location>
        <position position="265"/>
    </location>
</feature>
<feature type="disulfide bond" evidence="2">
    <location>
        <begin position="97"/>
        <end position="189"/>
    </location>
</feature>
<sequence>MMGQNQTSISDFLLLGLPIQPEQQNLCYALFLAMYLTTLLGNLLIIVLIRLDSHLHTPMYLFLSNLSFSDLCFSSVTIPKLLQNMQNQDPSIPYADCLTQMHFFLLFGDLESFLLVAMAYDRYVAICFPLHYTAIMSPMLCLSVVALSWVLTTFHAMLHTLLMARLCFCADNVIPHFFCDMSALLKLACSDTRVNEWVIFIMGGLIVVIPFLLILGSYARIVSSILKVPSFKGICKALSTCGSHLSVVSLFYGTVIGLYLCPSANSSTLKDTVMAMMYTVVTPMLNPFIYSLRNRDMKGALERVICKRKNPFLL</sequence>
<reference key="1">
    <citation type="journal article" date="1999" name="Genomics">
        <title>Primate evolution of an olfactory receptor cluster: diversification by gene conversion and recent emergence of pseudogenes.</title>
        <authorList>
            <person name="Sharon D."/>
            <person name="Glusman G."/>
            <person name="Pilpel Y."/>
            <person name="Khen M."/>
            <person name="Gruetzner F."/>
            <person name="Haaf T."/>
            <person name="Lancet D."/>
        </authorList>
    </citation>
    <scope>NUCLEOTIDE SEQUENCE [GENOMIC DNA]</scope>
</reference>
<keyword id="KW-1003">Cell membrane</keyword>
<keyword id="KW-1015">Disulfide bond</keyword>
<keyword id="KW-0297">G-protein coupled receptor</keyword>
<keyword id="KW-0325">Glycoprotein</keyword>
<keyword id="KW-0472">Membrane</keyword>
<keyword id="KW-0552">Olfaction</keyword>
<keyword id="KW-0675">Receptor</keyword>
<keyword id="KW-1185">Reference proteome</keyword>
<keyword id="KW-0716">Sensory transduction</keyword>
<keyword id="KW-0807">Transducer</keyword>
<keyword id="KW-0812">Transmembrane</keyword>
<keyword id="KW-1133">Transmembrane helix</keyword>
<comment type="function">
    <text evidence="3">Odorant receptor.</text>
</comment>
<comment type="subcellular location">
    <subcellularLocation>
        <location>Cell membrane</location>
        <topology>Multi-pass membrane protein</topology>
    </subcellularLocation>
</comment>
<comment type="similarity">
    <text evidence="2">Belongs to the G-protein coupled receptor 1 family.</text>
</comment>
<protein>
    <recommendedName>
        <fullName>Olfactory receptor 1E2</fullName>
    </recommendedName>
    <alternativeName>
        <fullName>Olfactory receptor 1E4</fullName>
    </alternativeName>
</protein>
<evidence type="ECO:0000255" key="1"/>
<evidence type="ECO:0000255" key="2">
    <source>
        <dbReference type="PROSITE-ProRule" id="PRU00521"/>
    </source>
</evidence>
<evidence type="ECO:0000305" key="3"/>
<dbReference type="EMBL" id="AF101740">
    <property type="protein sequence ID" value="AAF03322.1"/>
    <property type="molecule type" value="Genomic_DNA"/>
</dbReference>
<dbReference type="RefSeq" id="NP_001009162.1">
    <property type="nucleotide sequence ID" value="NM_001009162.1"/>
</dbReference>
<dbReference type="SMR" id="Q9TUA2"/>
<dbReference type="FunCoup" id="Q9TUA2">
    <property type="interactions" value="328"/>
</dbReference>
<dbReference type="STRING" id="9598.ENSPTRP00000014616"/>
<dbReference type="GlyCosmos" id="Q9TUA2">
    <property type="glycosylation" value="2 sites, No reported glycans"/>
</dbReference>
<dbReference type="PaxDb" id="9598-ENSPTRP00000014616"/>
<dbReference type="eggNOG" id="ENOG502SI5J">
    <property type="taxonomic scope" value="Eukaryota"/>
</dbReference>
<dbReference type="InParanoid" id="Q9TUA2"/>
<dbReference type="OrthoDB" id="7637at9604"/>
<dbReference type="Proteomes" id="UP000002277">
    <property type="component" value="Unplaced"/>
</dbReference>
<dbReference type="GO" id="GO:0005886">
    <property type="term" value="C:plasma membrane"/>
    <property type="evidence" value="ECO:0000318"/>
    <property type="project" value="GO_Central"/>
</dbReference>
<dbReference type="GO" id="GO:0004930">
    <property type="term" value="F:G protein-coupled receptor activity"/>
    <property type="evidence" value="ECO:0007669"/>
    <property type="project" value="UniProtKB-KW"/>
</dbReference>
<dbReference type="GO" id="GO:0004984">
    <property type="term" value="F:olfactory receptor activity"/>
    <property type="evidence" value="ECO:0000318"/>
    <property type="project" value="GO_Central"/>
</dbReference>
<dbReference type="GO" id="GO:0007165">
    <property type="term" value="P:signal transduction"/>
    <property type="evidence" value="ECO:0000318"/>
    <property type="project" value="GO_Central"/>
</dbReference>
<dbReference type="CDD" id="cd15236">
    <property type="entry name" value="7tmA_OR1E-like"/>
    <property type="match status" value="1"/>
</dbReference>
<dbReference type="FunFam" id="1.10.1220.70:FF:000001">
    <property type="entry name" value="Olfactory receptor"/>
    <property type="match status" value="1"/>
</dbReference>
<dbReference type="FunFam" id="1.20.1070.10:FF:000009">
    <property type="entry name" value="Olfactory receptor"/>
    <property type="match status" value="1"/>
</dbReference>
<dbReference type="Gene3D" id="1.20.1070.10">
    <property type="entry name" value="Rhodopsin 7-helix transmembrane proteins"/>
    <property type="match status" value="1"/>
</dbReference>
<dbReference type="InterPro" id="IPR000276">
    <property type="entry name" value="GPCR_Rhodpsn"/>
</dbReference>
<dbReference type="InterPro" id="IPR017452">
    <property type="entry name" value="GPCR_Rhodpsn_7TM"/>
</dbReference>
<dbReference type="InterPro" id="IPR000725">
    <property type="entry name" value="Olfact_rcpt"/>
</dbReference>
<dbReference type="PANTHER" id="PTHR48001">
    <property type="entry name" value="OLFACTORY RECEPTOR"/>
    <property type="match status" value="1"/>
</dbReference>
<dbReference type="Pfam" id="PF13853">
    <property type="entry name" value="7tm_4"/>
    <property type="match status" value="1"/>
</dbReference>
<dbReference type="PRINTS" id="PR00237">
    <property type="entry name" value="GPCRRHODOPSN"/>
</dbReference>
<dbReference type="PRINTS" id="PR00245">
    <property type="entry name" value="OLFACTORYR"/>
</dbReference>
<dbReference type="SUPFAM" id="SSF81321">
    <property type="entry name" value="Family A G protein-coupled receptor-like"/>
    <property type="match status" value="1"/>
</dbReference>
<dbReference type="PROSITE" id="PS00237">
    <property type="entry name" value="G_PROTEIN_RECEP_F1_1"/>
    <property type="match status" value="1"/>
</dbReference>
<dbReference type="PROSITE" id="PS50262">
    <property type="entry name" value="G_PROTEIN_RECEP_F1_2"/>
    <property type="match status" value="1"/>
</dbReference>
<organism>
    <name type="scientific">Pan troglodytes</name>
    <name type="common">Chimpanzee</name>
    <dbReference type="NCBI Taxonomy" id="9598"/>
    <lineage>
        <taxon>Eukaryota</taxon>
        <taxon>Metazoa</taxon>
        <taxon>Chordata</taxon>
        <taxon>Craniata</taxon>
        <taxon>Vertebrata</taxon>
        <taxon>Euteleostomi</taxon>
        <taxon>Mammalia</taxon>
        <taxon>Eutheria</taxon>
        <taxon>Euarchontoglires</taxon>
        <taxon>Primates</taxon>
        <taxon>Haplorrhini</taxon>
        <taxon>Catarrhini</taxon>
        <taxon>Hominidae</taxon>
        <taxon>Pan</taxon>
    </lineage>
</organism>
<name>OR1E2_PANTR</name>
<proteinExistence type="inferred from homology"/>
<gene>
    <name type="primary">OR1E2</name>
    <name type="synonym">OR1E4</name>
</gene>
<accession>Q9TUA2</accession>